<accession>Q5FLX3</accession>
<reference key="1">
    <citation type="journal article" date="2005" name="Proc. Natl. Acad. Sci. U.S.A.">
        <title>Complete genome sequence of the probiotic lactic acid bacterium Lactobacillus acidophilus NCFM.</title>
        <authorList>
            <person name="Altermann E."/>
            <person name="Russell W.M."/>
            <person name="Azcarate-Peril M.A."/>
            <person name="Barrangou R."/>
            <person name="Buck B.L."/>
            <person name="McAuliffe O."/>
            <person name="Souther N."/>
            <person name="Dobson A."/>
            <person name="Duong T."/>
            <person name="Callanan M."/>
            <person name="Lick S."/>
            <person name="Hamrick A."/>
            <person name="Cano R."/>
            <person name="Klaenhammer T.R."/>
        </authorList>
    </citation>
    <scope>NUCLEOTIDE SEQUENCE [LARGE SCALE GENOMIC DNA]</scope>
    <source>
        <strain>ATCC 700396 / NCK56 / N2 / NCFM</strain>
    </source>
</reference>
<proteinExistence type="inferred from homology"/>
<feature type="chain" id="PRO_0000224874" description="Holliday junction branch migration complex subunit RuvA">
    <location>
        <begin position="1"/>
        <end position="195"/>
    </location>
</feature>
<feature type="region of interest" description="Domain I" evidence="1">
    <location>
        <begin position="1"/>
        <end position="61"/>
    </location>
</feature>
<feature type="region of interest" description="Domain II" evidence="1">
    <location>
        <begin position="62"/>
        <end position="140"/>
    </location>
</feature>
<feature type="region of interest" description="Flexible linker" evidence="1">
    <location>
        <begin position="141"/>
        <end position="146"/>
    </location>
</feature>
<feature type="region of interest" description="Domain III" evidence="1">
    <location>
        <begin position="146"/>
        <end position="195"/>
    </location>
</feature>
<organism>
    <name type="scientific">Lactobacillus acidophilus (strain ATCC 700396 / NCK56 / N2 / NCFM)</name>
    <dbReference type="NCBI Taxonomy" id="272621"/>
    <lineage>
        <taxon>Bacteria</taxon>
        <taxon>Bacillati</taxon>
        <taxon>Bacillota</taxon>
        <taxon>Bacilli</taxon>
        <taxon>Lactobacillales</taxon>
        <taxon>Lactobacillaceae</taxon>
        <taxon>Lactobacillus</taxon>
    </lineage>
</organism>
<keyword id="KW-0963">Cytoplasm</keyword>
<keyword id="KW-0227">DNA damage</keyword>
<keyword id="KW-0233">DNA recombination</keyword>
<keyword id="KW-0234">DNA repair</keyword>
<keyword id="KW-0238">DNA-binding</keyword>
<keyword id="KW-1185">Reference proteome</keyword>
<evidence type="ECO:0000255" key="1">
    <source>
        <dbReference type="HAMAP-Rule" id="MF_00031"/>
    </source>
</evidence>
<sequence length="195" mass="21360">MYEYFEGIISEVTPSYVVVDVNGIGYKVFSPTPFAYKQGQKAKVYIEQIVRDTGITLYGFQDQDDKGLFLKLLSVSGIGPKSAMAIMAAEDSNSLAEAIEQGEVKYLTRFPGVGKKTASQIVLDLKGKLGDYVARLDKPENGEEISPALNDALLALIALGYTQKEVDRITPKLVEIEADTADQYIKKGLALLLKK</sequence>
<gene>
    <name evidence="1" type="primary">ruvA</name>
    <name type="ordered locus">LBA0410</name>
</gene>
<dbReference type="EMBL" id="CP000033">
    <property type="protein sequence ID" value="AAV42301.1"/>
    <property type="molecule type" value="Genomic_DNA"/>
</dbReference>
<dbReference type="RefSeq" id="WP_003549165.1">
    <property type="nucleotide sequence ID" value="NC_006814.3"/>
</dbReference>
<dbReference type="RefSeq" id="YP_193332.1">
    <property type="nucleotide sequence ID" value="NC_006814.3"/>
</dbReference>
<dbReference type="SMR" id="Q5FLX3"/>
<dbReference type="STRING" id="272621.LBA0410"/>
<dbReference type="GeneID" id="93290491"/>
<dbReference type="KEGG" id="lac:LBA0410"/>
<dbReference type="PATRIC" id="fig|272621.13.peg.395"/>
<dbReference type="eggNOG" id="COG0632">
    <property type="taxonomic scope" value="Bacteria"/>
</dbReference>
<dbReference type="HOGENOM" id="CLU_087936_1_0_9"/>
<dbReference type="OrthoDB" id="5293449at2"/>
<dbReference type="BioCyc" id="LACI272621:G1G49-404-MONOMER"/>
<dbReference type="Proteomes" id="UP000006381">
    <property type="component" value="Chromosome"/>
</dbReference>
<dbReference type="GO" id="GO:0005737">
    <property type="term" value="C:cytoplasm"/>
    <property type="evidence" value="ECO:0007669"/>
    <property type="project" value="UniProtKB-SubCell"/>
</dbReference>
<dbReference type="GO" id="GO:0009379">
    <property type="term" value="C:Holliday junction helicase complex"/>
    <property type="evidence" value="ECO:0007669"/>
    <property type="project" value="InterPro"/>
</dbReference>
<dbReference type="GO" id="GO:0048476">
    <property type="term" value="C:Holliday junction resolvase complex"/>
    <property type="evidence" value="ECO:0007669"/>
    <property type="project" value="UniProtKB-UniRule"/>
</dbReference>
<dbReference type="GO" id="GO:0005524">
    <property type="term" value="F:ATP binding"/>
    <property type="evidence" value="ECO:0007669"/>
    <property type="project" value="InterPro"/>
</dbReference>
<dbReference type="GO" id="GO:0000400">
    <property type="term" value="F:four-way junction DNA binding"/>
    <property type="evidence" value="ECO:0007669"/>
    <property type="project" value="UniProtKB-UniRule"/>
</dbReference>
<dbReference type="GO" id="GO:0009378">
    <property type="term" value="F:four-way junction helicase activity"/>
    <property type="evidence" value="ECO:0007669"/>
    <property type="project" value="InterPro"/>
</dbReference>
<dbReference type="GO" id="GO:0006310">
    <property type="term" value="P:DNA recombination"/>
    <property type="evidence" value="ECO:0007669"/>
    <property type="project" value="UniProtKB-UniRule"/>
</dbReference>
<dbReference type="GO" id="GO:0006281">
    <property type="term" value="P:DNA repair"/>
    <property type="evidence" value="ECO:0007669"/>
    <property type="project" value="UniProtKB-UniRule"/>
</dbReference>
<dbReference type="CDD" id="cd14332">
    <property type="entry name" value="UBA_RuvA_C"/>
    <property type="match status" value="1"/>
</dbReference>
<dbReference type="Gene3D" id="1.10.150.20">
    <property type="entry name" value="5' to 3' exonuclease, C-terminal subdomain"/>
    <property type="match status" value="1"/>
</dbReference>
<dbReference type="Gene3D" id="1.10.8.10">
    <property type="entry name" value="DNA helicase RuvA subunit, C-terminal domain"/>
    <property type="match status" value="1"/>
</dbReference>
<dbReference type="Gene3D" id="2.40.50.140">
    <property type="entry name" value="Nucleic acid-binding proteins"/>
    <property type="match status" value="1"/>
</dbReference>
<dbReference type="HAMAP" id="MF_00031">
    <property type="entry name" value="DNA_HJ_migration_RuvA"/>
    <property type="match status" value="1"/>
</dbReference>
<dbReference type="InterPro" id="IPR013849">
    <property type="entry name" value="DNA_helicase_Holl-junc_RuvA_I"/>
</dbReference>
<dbReference type="InterPro" id="IPR003583">
    <property type="entry name" value="Hlx-hairpin-Hlx_DNA-bd_motif"/>
</dbReference>
<dbReference type="InterPro" id="IPR012340">
    <property type="entry name" value="NA-bd_OB-fold"/>
</dbReference>
<dbReference type="InterPro" id="IPR000085">
    <property type="entry name" value="RuvA"/>
</dbReference>
<dbReference type="InterPro" id="IPR010994">
    <property type="entry name" value="RuvA_2-like"/>
</dbReference>
<dbReference type="InterPro" id="IPR011114">
    <property type="entry name" value="RuvA_C"/>
</dbReference>
<dbReference type="InterPro" id="IPR036267">
    <property type="entry name" value="RuvA_C_sf"/>
</dbReference>
<dbReference type="NCBIfam" id="TIGR00084">
    <property type="entry name" value="ruvA"/>
    <property type="match status" value="1"/>
</dbReference>
<dbReference type="Pfam" id="PF14520">
    <property type="entry name" value="HHH_5"/>
    <property type="match status" value="1"/>
</dbReference>
<dbReference type="Pfam" id="PF07499">
    <property type="entry name" value="RuvA_C"/>
    <property type="match status" value="1"/>
</dbReference>
<dbReference type="Pfam" id="PF01330">
    <property type="entry name" value="RuvA_N"/>
    <property type="match status" value="1"/>
</dbReference>
<dbReference type="SMART" id="SM00278">
    <property type="entry name" value="HhH1"/>
    <property type="match status" value="2"/>
</dbReference>
<dbReference type="SUPFAM" id="SSF46929">
    <property type="entry name" value="DNA helicase RuvA subunit, C-terminal domain"/>
    <property type="match status" value="1"/>
</dbReference>
<dbReference type="SUPFAM" id="SSF50249">
    <property type="entry name" value="Nucleic acid-binding proteins"/>
    <property type="match status" value="1"/>
</dbReference>
<dbReference type="SUPFAM" id="SSF47781">
    <property type="entry name" value="RuvA domain 2-like"/>
    <property type="match status" value="1"/>
</dbReference>
<name>RUVA_LACAC</name>
<comment type="function">
    <text evidence="1">The RuvA-RuvB-RuvC complex processes Holliday junction (HJ) DNA during genetic recombination and DNA repair, while the RuvA-RuvB complex plays an important role in the rescue of blocked DNA replication forks via replication fork reversal (RFR). RuvA specifically binds to HJ cruciform DNA, conferring on it an open structure. The RuvB hexamer acts as an ATP-dependent pump, pulling dsDNA into and through the RuvAB complex. HJ branch migration allows RuvC to scan DNA until it finds its consensus sequence, where it cleaves and resolves the cruciform DNA.</text>
</comment>
<comment type="subunit">
    <text evidence="1">Homotetramer. Forms an RuvA(8)-RuvB(12)-Holliday junction (HJ) complex. HJ DNA is sandwiched between 2 RuvA tetramers; dsDNA enters through RuvA and exits via RuvB. An RuvB hexamer assembles on each DNA strand where it exits the tetramer. Each RuvB hexamer is contacted by two RuvA subunits (via domain III) on 2 adjacent RuvB subunits; this complex drives branch migration. In the full resolvosome a probable DNA-RuvA(4)-RuvB(12)-RuvC(2) complex forms which resolves the HJ.</text>
</comment>
<comment type="subcellular location">
    <subcellularLocation>
        <location evidence="1">Cytoplasm</location>
    </subcellularLocation>
</comment>
<comment type="domain">
    <text evidence="1">Has three domains with a flexible linker between the domains II and III and assumes an 'L' shape. Domain III is highly mobile and contacts RuvB.</text>
</comment>
<comment type="similarity">
    <text evidence="1">Belongs to the RuvA family.</text>
</comment>
<protein>
    <recommendedName>
        <fullName evidence="1">Holliday junction branch migration complex subunit RuvA</fullName>
    </recommendedName>
</protein>